<organism>
    <name type="scientific">Arabidopsis thaliana</name>
    <name type="common">Mouse-ear cress</name>
    <dbReference type="NCBI Taxonomy" id="3702"/>
    <lineage>
        <taxon>Eukaryota</taxon>
        <taxon>Viridiplantae</taxon>
        <taxon>Streptophyta</taxon>
        <taxon>Embryophyta</taxon>
        <taxon>Tracheophyta</taxon>
        <taxon>Spermatophyta</taxon>
        <taxon>Magnoliopsida</taxon>
        <taxon>eudicotyledons</taxon>
        <taxon>Gunneridae</taxon>
        <taxon>Pentapetalae</taxon>
        <taxon>rosids</taxon>
        <taxon>malvids</taxon>
        <taxon>Brassicales</taxon>
        <taxon>Brassicaceae</taxon>
        <taxon>Camelineae</taxon>
        <taxon>Arabidopsis</taxon>
    </lineage>
</organism>
<protein>
    <recommendedName>
        <fullName>Pentatricopeptide repeat-containing protein At3g29290</fullName>
    </recommendedName>
    <alternativeName>
        <fullName>Protein EMBRYO DEFECTIVE 2076</fullName>
    </alternativeName>
</protein>
<proteinExistence type="evidence at transcript level"/>
<reference key="1">
    <citation type="journal article" date="2000" name="DNA Res.">
        <title>Structural analysis of Arabidopsis thaliana chromosome 3. II. Sequence features of the 4,251,695 bp regions covered by 90 P1, TAC and BAC clones.</title>
        <authorList>
            <person name="Kaneko T."/>
            <person name="Katoh T."/>
            <person name="Sato S."/>
            <person name="Nakamura Y."/>
            <person name="Asamizu E."/>
            <person name="Tabata S."/>
        </authorList>
    </citation>
    <scope>NUCLEOTIDE SEQUENCE [LARGE SCALE GENOMIC DNA]</scope>
    <source>
        <strain>cv. Columbia</strain>
    </source>
</reference>
<reference key="2">
    <citation type="journal article" date="2017" name="Plant J.">
        <title>Araport11: a complete reannotation of the Arabidopsis thaliana reference genome.</title>
        <authorList>
            <person name="Cheng C.Y."/>
            <person name="Krishnakumar V."/>
            <person name="Chan A.P."/>
            <person name="Thibaud-Nissen F."/>
            <person name="Schobel S."/>
            <person name="Town C.D."/>
        </authorList>
    </citation>
    <scope>GENOME REANNOTATION</scope>
    <source>
        <strain>cv. Columbia</strain>
    </source>
</reference>
<reference key="3">
    <citation type="journal article" date="2003" name="Science">
        <title>Empirical analysis of transcriptional activity in the Arabidopsis genome.</title>
        <authorList>
            <person name="Yamada K."/>
            <person name="Lim J."/>
            <person name="Dale J.M."/>
            <person name="Chen H."/>
            <person name="Shinn P."/>
            <person name="Palm C.J."/>
            <person name="Southwick A.M."/>
            <person name="Wu H.C."/>
            <person name="Kim C.J."/>
            <person name="Nguyen M."/>
            <person name="Pham P.K."/>
            <person name="Cheuk R.F."/>
            <person name="Karlin-Newmann G."/>
            <person name="Liu S.X."/>
            <person name="Lam B."/>
            <person name="Sakano H."/>
            <person name="Wu T."/>
            <person name="Yu G."/>
            <person name="Miranda M."/>
            <person name="Quach H.L."/>
            <person name="Tripp M."/>
            <person name="Chang C.H."/>
            <person name="Lee J.M."/>
            <person name="Toriumi M.J."/>
            <person name="Chan M.M."/>
            <person name="Tang C.C."/>
            <person name="Onodera C.S."/>
            <person name="Deng J.M."/>
            <person name="Akiyama K."/>
            <person name="Ansari Y."/>
            <person name="Arakawa T."/>
            <person name="Banh J."/>
            <person name="Banno F."/>
            <person name="Bowser L."/>
            <person name="Brooks S.Y."/>
            <person name="Carninci P."/>
            <person name="Chao Q."/>
            <person name="Choy N."/>
            <person name="Enju A."/>
            <person name="Goldsmith A.D."/>
            <person name="Gurjal M."/>
            <person name="Hansen N.F."/>
            <person name="Hayashizaki Y."/>
            <person name="Johnson-Hopson C."/>
            <person name="Hsuan V.W."/>
            <person name="Iida K."/>
            <person name="Karnes M."/>
            <person name="Khan S."/>
            <person name="Koesema E."/>
            <person name="Ishida J."/>
            <person name="Jiang P.X."/>
            <person name="Jones T."/>
            <person name="Kawai J."/>
            <person name="Kamiya A."/>
            <person name="Meyers C."/>
            <person name="Nakajima M."/>
            <person name="Narusaka M."/>
            <person name="Seki M."/>
            <person name="Sakurai T."/>
            <person name="Satou M."/>
            <person name="Tamse R."/>
            <person name="Vaysberg M."/>
            <person name="Wallender E.K."/>
            <person name="Wong C."/>
            <person name="Yamamura Y."/>
            <person name="Yuan S."/>
            <person name="Shinozaki K."/>
            <person name="Davis R.W."/>
            <person name="Theologis A."/>
            <person name="Ecker J.R."/>
        </authorList>
    </citation>
    <scope>NUCLEOTIDE SEQUENCE [LARGE SCALE MRNA]</scope>
    <source>
        <strain>cv. Columbia</strain>
    </source>
</reference>
<reference key="4">
    <citation type="journal article" date="2004" name="Plant Cell">
        <title>Genome-wide analysis of Arabidopsis pentatricopeptide repeat proteins reveals their essential role in organelle biogenesis.</title>
        <authorList>
            <person name="Lurin C."/>
            <person name="Andres C."/>
            <person name="Aubourg S."/>
            <person name="Bellaoui M."/>
            <person name="Bitton F."/>
            <person name="Bruyere C."/>
            <person name="Caboche M."/>
            <person name="Debast C."/>
            <person name="Gualberto J."/>
            <person name="Hoffmann B."/>
            <person name="Lecharny A."/>
            <person name="Le Ret M."/>
            <person name="Martin-Magniette M.-L."/>
            <person name="Mireau H."/>
            <person name="Peeters N."/>
            <person name="Renou J.-P."/>
            <person name="Szurek B."/>
            <person name="Taconnat L."/>
            <person name="Small I."/>
        </authorList>
    </citation>
    <scope>GENE FAMILY</scope>
</reference>
<dbReference type="EMBL" id="AP002045">
    <property type="protein sequence ID" value="BAB03125.1"/>
    <property type="status" value="ALT_INIT"/>
    <property type="molecule type" value="Genomic_DNA"/>
</dbReference>
<dbReference type="EMBL" id="CP002686">
    <property type="protein sequence ID" value="AEE77563.1"/>
    <property type="molecule type" value="Genomic_DNA"/>
</dbReference>
<dbReference type="EMBL" id="CP002686">
    <property type="protein sequence ID" value="ANM63516.1"/>
    <property type="molecule type" value="Genomic_DNA"/>
</dbReference>
<dbReference type="EMBL" id="CP002686">
    <property type="protein sequence ID" value="ANM63517.1"/>
    <property type="molecule type" value="Genomic_DNA"/>
</dbReference>
<dbReference type="EMBL" id="CP002686">
    <property type="protein sequence ID" value="ANM63518.1"/>
    <property type="molecule type" value="Genomic_DNA"/>
</dbReference>
<dbReference type="EMBL" id="CP002686">
    <property type="protein sequence ID" value="ANM63519.1"/>
    <property type="molecule type" value="Genomic_DNA"/>
</dbReference>
<dbReference type="EMBL" id="BT004061">
    <property type="protein sequence ID" value="AAO42091.1"/>
    <property type="molecule type" value="mRNA"/>
</dbReference>
<dbReference type="EMBL" id="BT005140">
    <property type="protein sequence ID" value="AAO50673.1"/>
    <property type="molecule type" value="mRNA"/>
</dbReference>
<dbReference type="RefSeq" id="NP_001325599.1">
    <property type="nucleotide sequence ID" value="NM_001339017.1"/>
</dbReference>
<dbReference type="RefSeq" id="NP_001325600.1">
    <property type="nucleotide sequence ID" value="NM_001339018.1"/>
</dbReference>
<dbReference type="RefSeq" id="NP_001325601.1">
    <property type="nucleotide sequence ID" value="NM_001339019.1"/>
</dbReference>
<dbReference type="RefSeq" id="NP_001325602.1">
    <property type="nucleotide sequence ID" value="NM_001339020.1"/>
</dbReference>
<dbReference type="RefSeq" id="NP_189575.2">
    <property type="nucleotide sequence ID" value="NM_113854.5"/>
</dbReference>
<dbReference type="SMR" id="Q84J46"/>
<dbReference type="FunCoup" id="Q84J46">
    <property type="interactions" value="1847"/>
</dbReference>
<dbReference type="STRING" id="3702.Q84J46"/>
<dbReference type="iPTMnet" id="Q84J46"/>
<dbReference type="PaxDb" id="3702-AT3G29290.1"/>
<dbReference type="ProteomicsDB" id="249192"/>
<dbReference type="EnsemblPlants" id="AT3G29290.1">
    <property type="protein sequence ID" value="AT3G29290.1"/>
    <property type="gene ID" value="AT3G29290"/>
</dbReference>
<dbReference type="EnsemblPlants" id="AT3G29290.2">
    <property type="protein sequence ID" value="AT3G29290.2"/>
    <property type="gene ID" value="AT3G29290"/>
</dbReference>
<dbReference type="EnsemblPlants" id="AT3G29290.3">
    <property type="protein sequence ID" value="AT3G29290.3"/>
    <property type="gene ID" value="AT3G29290"/>
</dbReference>
<dbReference type="EnsemblPlants" id="AT3G29290.4">
    <property type="protein sequence ID" value="AT3G29290.4"/>
    <property type="gene ID" value="AT3G29290"/>
</dbReference>
<dbReference type="EnsemblPlants" id="AT3G29290.5">
    <property type="protein sequence ID" value="AT3G29290.5"/>
    <property type="gene ID" value="AT3G29290"/>
</dbReference>
<dbReference type="GeneID" id="822586"/>
<dbReference type="Gramene" id="AT3G29290.1">
    <property type="protein sequence ID" value="AT3G29290.1"/>
    <property type="gene ID" value="AT3G29290"/>
</dbReference>
<dbReference type="Gramene" id="AT3G29290.2">
    <property type="protein sequence ID" value="AT3G29290.2"/>
    <property type="gene ID" value="AT3G29290"/>
</dbReference>
<dbReference type="Gramene" id="AT3G29290.3">
    <property type="protein sequence ID" value="AT3G29290.3"/>
    <property type="gene ID" value="AT3G29290"/>
</dbReference>
<dbReference type="Gramene" id="AT3G29290.4">
    <property type="protein sequence ID" value="AT3G29290.4"/>
    <property type="gene ID" value="AT3G29290"/>
</dbReference>
<dbReference type="Gramene" id="AT3G29290.5">
    <property type="protein sequence ID" value="AT3G29290.5"/>
    <property type="gene ID" value="AT3G29290"/>
</dbReference>
<dbReference type="KEGG" id="ath:AT3G29290"/>
<dbReference type="Araport" id="AT3G29290"/>
<dbReference type="TAIR" id="AT3G29290">
    <property type="gene designation" value="EMB2076"/>
</dbReference>
<dbReference type="eggNOG" id="KOG4197">
    <property type="taxonomic scope" value="Eukaryota"/>
</dbReference>
<dbReference type="HOGENOM" id="CLU_002706_10_2_1"/>
<dbReference type="InParanoid" id="Q84J46"/>
<dbReference type="OMA" id="ARIHPWS"/>
<dbReference type="PhylomeDB" id="Q84J46"/>
<dbReference type="PRO" id="PR:Q84J46"/>
<dbReference type="Proteomes" id="UP000006548">
    <property type="component" value="Chromosome 3"/>
</dbReference>
<dbReference type="ExpressionAtlas" id="Q84J46">
    <property type="expression patterns" value="baseline and differential"/>
</dbReference>
<dbReference type="Gene3D" id="1.25.40.10">
    <property type="entry name" value="Tetratricopeptide repeat domain"/>
    <property type="match status" value="4"/>
</dbReference>
<dbReference type="InterPro" id="IPR002885">
    <property type="entry name" value="Pentatricopeptide_rpt"/>
</dbReference>
<dbReference type="InterPro" id="IPR011990">
    <property type="entry name" value="TPR-like_helical_dom_sf"/>
</dbReference>
<dbReference type="NCBIfam" id="TIGR00756">
    <property type="entry name" value="PPR"/>
    <property type="match status" value="8"/>
</dbReference>
<dbReference type="PANTHER" id="PTHR47447">
    <property type="entry name" value="OS03G0856100 PROTEIN"/>
    <property type="match status" value="1"/>
</dbReference>
<dbReference type="PANTHER" id="PTHR47447:SF17">
    <property type="entry name" value="OS12G0638900 PROTEIN"/>
    <property type="match status" value="1"/>
</dbReference>
<dbReference type="Pfam" id="PF01535">
    <property type="entry name" value="PPR"/>
    <property type="match status" value="5"/>
</dbReference>
<dbReference type="Pfam" id="PF13041">
    <property type="entry name" value="PPR_2"/>
    <property type="match status" value="3"/>
</dbReference>
<dbReference type="PROSITE" id="PS51375">
    <property type="entry name" value="PPR"/>
    <property type="match status" value="10"/>
</dbReference>
<sequence length="540" mass="62060">MGAVWLSHVSQLVCGCYLIEQSSCVLRTFHWSLSHSLNFTLTMKPKRRRLGVKMESFSLATPNMCFRKVSSELDSSFNGENVVCGLELEEKTAGDRNRIHFLEERNEETLSKRLRKLSRLDKVRSALELFDSMRFLGLQPNAHACNSFLSCLLRNGDIQKAFTVFEFMRKKENVTGHTYSLMLKAVAEVKGCESALRMFRELEREPKRRSCFDVVLYNTAISLCGRINNVYETERIWRVMKGDGHIGTEITYSLLVSIFVRCGRSELALDVYDEMVNNKISLREDAMYAMISACTKEEKWDLALKIFQSMLKKGMKPNLVACNTLINSLGKAGKVGLVFKVYSVLKSLGHKPDEYTWNALLTALYKANRYEDVLQLFDMIRSENLCCLNEYLYNTAMVSCQKLGYWEKAVKLLYEMEGSGLTVSTSSYNLVISACEKSRKSKVALLVYEHMAQRDCKPNTFTYLSLVRSCIWGSLWDEVEDILKKVEPDVSLYNAAIHGMCLRREFKFAKELYVKMREMGLEPDGKTRAMMLQNLKKHQK</sequence>
<name>PP262_ARATH</name>
<accession>Q84J46</accession>
<accession>A0A1I9LLR0</accession>
<accession>Q9LHJ5</accession>
<keyword id="KW-1185">Reference proteome</keyword>
<keyword id="KW-0677">Repeat</keyword>
<comment type="similarity">
    <text evidence="1">Belongs to the PPR family. P subfamily.</text>
</comment>
<comment type="sequence caution" evidence="1">
    <conflict type="erroneous initiation">
        <sequence resource="EMBL-CDS" id="BAB03125"/>
    </conflict>
</comment>
<comment type="online information" name="Pentatricopeptide repeat proteins">
    <link uri="https://ppr.plantenergy.uwa.edu.au"/>
</comment>
<gene>
    <name type="primary">EMB2076</name>
    <name type="ordered locus">At3g29290</name>
    <name type="ORF">MMF24.4</name>
</gene>
<evidence type="ECO:0000305" key="1"/>
<feature type="chain" id="PRO_0000356121" description="Pentatricopeptide repeat-containing protein At3g29290">
    <location>
        <begin position="1"/>
        <end position="540"/>
    </location>
</feature>
<feature type="repeat" description="PPR 1">
    <location>
        <begin position="106"/>
        <end position="140"/>
    </location>
</feature>
<feature type="repeat" description="PPR 2">
    <location>
        <begin position="141"/>
        <end position="175"/>
    </location>
</feature>
<feature type="repeat" description="PPR 3">
    <location>
        <begin position="177"/>
        <end position="205"/>
    </location>
</feature>
<feature type="repeat" description="PPR 4">
    <location>
        <begin position="213"/>
        <end position="247"/>
    </location>
</feature>
<feature type="repeat" description="PPR 5">
    <location>
        <begin position="248"/>
        <end position="282"/>
    </location>
</feature>
<feature type="repeat" description="PPR 6">
    <location>
        <begin position="283"/>
        <end position="317"/>
    </location>
</feature>
<feature type="repeat" description="PPR 7">
    <location>
        <begin position="318"/>
        <end position="352"/>
    </location>
</feature>
<feature type="repeat" description="PPR 8">
    <location>
        <begin position="353"/>
        <end position="387"/>
    </location>
</feature>
<feature type="repeat" description="PPR 9">
    <location>
        <begin position="389"/>
        <end position="423"/>
    </location>
</feature>
<feature type="repeat" description="PPR 10">
    <location>
        <begin position="424"/>
        <end position="458"/>
    </location>
</feature>
<feature type="repeat" description="PPR 11">
    <location>
        <begin position="459"/>
        <end position="487"/>
    </location>
</feature>
<feature type="repeat" description="PPR 12">
    <location>
        <begin position="489"/>
        <end position="523"/>
    </location>
</feature>